<evidence type="ECO:0000255" key="1"/>
<evidence type="ECO:0000269" key="2">
    <source>
    </source>
</evidence>
<evidence type="ECO:0000269" key="3">
    <source>
    </source>
</evidence>
<evidence type="ECO:0000269" key="4">
    <source>
    </source>
</evidence>
<evidence type="ECO:0000303" key="5">
    <source>
    </source>
</evidence>
<evidence type="ECO:0000303" key="6">
    <source>
    </source>
</evidence>
<evidence type="ECO:0000305" key="7"/>
<evidence type="ECO:0000312" key="8">
    <source>
        <dbReference type="HGNC" id="HGNC:29645"/>
    </source>
</evidence>
<accession>Q9NXK6</accession>
<accession>Q8IXU2</accession>
<reference key="1">
    <citation type="journal article" date="2005" name="J. Mol. Evol.">
        <title>PAQR proteins: a novel membrane receptor family defined by an ancient 7-transmembrane pass motif.</title>
        <authorList>
            <person name="Tang Y.T."/>
            <person name="Hu T."/>
            <person name="Arterburn M."/>
            <person name="Boyle B."/>
            <person name="Bright J.M."/>
            <person name="Emtage P.C."/>
            <person name="Funk W.D."/>
        </authorList>
    </citation>
    <scope>NUCLEOTIDE SEQUENCE [MRNA]</scope>
    <scope>TISSUE SPECIFICITY</scope>
</reference>
<reference key="2">
    <citation type="journal article" date="2004" name="Nat. Genet.">
        <title>Complete sequencing and characterization of 21,243 full-length human cDNAs.</title>
        <authorList>
            <person name="Ota T."/>
            <person name="Suzuki Y."/>
            <person name="Nishikawa T."/>
            <person name="Otsuki T."/>
            <person name="Sugiyama T."/>
            <person name="Irie R."/>
            <person name="Wakamatsu A."/>
            <person name="Hayashi K."/>
            <person name="Sato H."/>
            <person name="Nagai K."/>
            <person name="Kimura K."/>
            <person name="Makita H."/>
            <person name="Sekine M."/>
            <person name="Obayashi M."/>
            <person name="Nishi T."/>
            <person name="Shibahara T."/>
            <person name="Tanaka T."/>
            <person name="Ishii S."/>
            <person name="Yamamoto J."/>
            <person name="Saito K."/>
            <person name="Kawai Y."/>
            <person name="Isono Y."/>
            <person name="Nakamura Y."/>
            <person name="Nagahari K."/>
            <person name="Murakami K."/>
            <person name="Yasuda T."/>
            <person name="Iwayanagi T."/>
            <person name="Wagatsuma M."/>
            <person name="Shiratori A."/>
            <person name="Sudo H."/>
            <person name="Hosoiri T."/>
            <person name="Kaku Y."/>
            <person name="Kodaira H."/>
            <person name="Kondo H."/>
            <person name="Sugawara M."/>
            <person name="Takahashi M."/>
            <person name="Kanda K."/>
            <person name="Yokoi T."/>
            <person name="Furuya T."/>
            <person name="Kikkawa E."/>
            <person name="Omura Y."/>
            <person name="Abe K."/>
            <person name="Kamihara K."/>
            <person name="Katsuta N."/>
            <person name="Sato K."/>
            <person name="Tanikawa M."/>
            <person name="Yamazaki M."/>
            <person name="Ninomiya K."/>
            <person name="Ishibashi T."/>
            <person name="Yamashita H."/>
            <person name="Murakawa K."/>
            <person name="Fujimori K."/>
            <person name="Tanai H."/>
            <person name="Kimata M."/>
            <person name="Watanabe M."/>
            <person name="Hiraoka S."/>
            <person name="Chiba Y."/>
            <person name="Ishida S."/>
            <person name="Ono Y."/>
            <person name="Takiguchi S."/>
            <person name="Watanabe S."/>
            <person name="Yosida M."/>
            <person name="Hotuta T."/>
            <person name="Kusano J."/>
            <person name="Kanehori K."/>
            <person name="Takahashi-Fujii A."/>
            <person name="Hara H."/>
            <person name="Tanase T.-O."/>
            <person name="Nomura Y."/>
            <person name="Togiya S."/>
            <person name="Komai F."/>
            <person name="Hara R."/>
            <person name="Takeuchi K."/>
            <person name="Arita M."/>
            <person name="Imose N."/>
            <person name="Musashino K."/>
            <person name="Yuuki H."/>
            <person name="Oshima A."/>
            <person name="Sasaki N."/>
            <person name="Aotsuka S."/>
            <person name="Yoshikawa Y."/>
            <person name="Matsunawa H."/>
            <person name="Ichihara T."/>
            <person name="Shiohata N."/>
            <person name="Sano S."/>
            <person name="Moriya S."/>
            <person name="Momiyama H."/>
            <person name="Satoh N."/>
            <person name="Takami S."/>
            <person name="Terashima Y."/>
            <person name="Suzuki O."/>
            <person name="Nakagawa S."/>
            <person name="Senoh A."/>
            <person name="Mizoguchi H."/>
            <person name="Goto Y."/>
            <person name="Shimizu F."/>
            <person name="Wakebe H."/>
            <person name="Hishigaki H."/>
            <person name="Watanabe T."/>
            <person name="Sugiyama A."/>
            <person name="Takemoto M."/>
            <person name="Kawakami B."/>
            <person name="Yamazaki M."/>
            <person name="Watanabe K."/>
            <person name="Kumagai A."/>
            <person name="Itakura S."/>
            <person name="Fukuzumi Y."/>
            <person name="Fujimori Y."/>
            <person name="Komiyama M."/>
            <person name="Tashiro H."/>
            <person name="Tanigami A."/>
            <person name="Fujiwara T."/>
            <person name="Ono T."/>
            <person name="Yamada K."/>
            <person name="Fujii Y."/>
            <person name="Ozaki K."/>
            <person name="Hirao M."/>
            <person name="Ohmori Y."/>
            <person name="Kawabata A."/>
            <person name="Hikiji T."/>
            <person name="Kobatake N."/>
            <person name="Inagaki H."/>
            <person name="Ikema Y."/>
            <person name="Okamoto S."/>
            <person name="Okitani R."/>
            <person name="Kawakami T."/>
            <person name="Noguchi S."/>
            <person name="Itoh T."/>
            <person name="Shigeta K."/>
            <person name="Senba T."/>
            <person name="Matsumura K."/>
            <person name="Nakajima Y."/>
            <person name="Mizuno T."/>
            <person name="Morinaga M."/>
            <person name="Sasaki M."/>
            <person name="Togashi T."/>
            <person name="Oyama M."/>
            <person name="Hata H."/>
            <person name="Watanabe M."/>
            <person name="Komatsu T."/>
            <person name="Mizushima-Sugano J."/>
            <person name="Satoh T."/>
            <person name="Shirai Y."/>
            <person name="Takahashi Y."/>
            <person name="Nakagawa K."/>
            <person name="Okumura K."/>
            <person name="Nagase T."/>
            <person name="Nomura N."/>
            <person name="Kikuchi H."/>
            <person name="Masuho Y."/>
            <person name="Yamashita R."/>
            <person name="Nakai K."/>
            <person name="Yada T."/>
            <person name="Nakamura Y."/>
            <person name="Ohara O."/>
            <person name="Isogai T."/>
            <person name="Sugano S."/>
        </authorList>
    </citation>
    <scope>NUCLEOTIDE SEQUENCE [LARGE SCALE MRNA]</scope>
    <source>
        <tissue>Colon mucosa</tissue>
    </source>
</reference>
<reference key="3">
    <citation type="journal article" date="2004" name="Genome Res.">
        <title>The status, quality, and expansion of the NIH full-length cDNA project: the Mammalian Gene Collection (MGC).</title>
        <authorList>
            <consortium name="The MGC Project Team"/>
        </authorList>
    </citation>
    <scope>NUCLEOTIDE SEQUENCE [LARGE SCALE MRNA]</scope>
    <scope>VARIANT THR-24</scope>
    <source>
        <tissue>Kidney</tissue>
    </source>
</reference>
<reference key="4">
    <citation type="journal article" date="2003" name="Proc. Natl. Acad. Sci. U.S.A.">
        <title>Identification, classification, and partial characterization of genes in humans and other vertebrates homologous to a fish membrane progestin receptor.</title>
        <authorList>
            <person name="Zhu Y."/>
            <person name="Bond J."/>
            <person name="Thomas P."/>
        </authorList>
    </citation>
    <scope>FUNCTION</scope>
    <scope>TISSUE SPECIFICITY</scope>
</reference>
<reference key="5">
    <citation type="journal article" date="2003" name="Proc. Natl. Acad. Sci. U.S.A.">
        <title>The further redefining of steroid-mediated signaling.</title>
        <authorList>
            <person name="Hammes S.R."/>
        </authorList>
    </citation>
    <scope>REVIEW</scope>
</reference>
<reference key="6">
    <citation type="journal article" date="2013" name="J. Neuroendocrinol.">
        <title>Nonclassical progesterone signalling molecules in the nervous system.</title>
        <authorList>
            <person name="Petersen S.L."/>
            <person name="Intlekofer K.A."/>
            <person name="Moura-Conlon P.J."/>
            <person name="Brewer D.N."/>
            <person name="Del Pino Sans J."/>
            <person name="Lopez J.A."/>
        </authorList>
    </citation>
    <scope>FUNCTION</scope>
    <scope>REVIEW</scope>
    <scope>SUBCELLULAR LOCATION</scope>
</reference>
<protein>
    <recommendedName>
        <fullName evidence="6">Membrane progestin receptor gamma</fullName>
        <shortName evidence="6">mPR gamma</shortName>
    </recommendedName>
    <alternativeName>
        <fullName evidence="6">Membrane progesterone P4 receptor gamma</fullName>
    </alternativeName>
    <alternativeName>
        <fullName evidence="6">Membrane progesterone receptor gamma</fullName>
    </alternativeName>
    <alternativeName>
        <fullName>Progesterone and adipoQ receptor family member 5</fullName>
    </alternativeName>
    <alternativeName>
        <fullName evidence="5">Progestin and adipoQ receptor family member 5</fullName>
    </alternativeName>
    <alternativeName>
        <fullName>Progestin and adipoQ receptor family member V</fullName>
    </alternativeName>
</protein>
<name>PAQR5_HUMAN</name>
<keyword id="KW-1003">Cell membrane</keyword>
<keyword id="KW-0217">Developmental protein</keyword>
<keyword id="KW-0221">Differentiation</keyword>
<keyword id="KW-0446">Lipid-binding</keyword>
<keyword id="KW-0472">Membrane</keyword>
<keyword id="KW-0896">Oogenesis</keyword>
<keyword id="KW-1267">Proteomics identification</keyword>
<keyword id="KW-0675">Receptor</keyword>
<keyword id="KW-1185">Reference proteome</keyword>
<keyword id="KW-0754">Steroid-binding</keyword>
<keyword id="KW-0812">Transmembrane</keyword>
<keyword id="KW-1133">Transmembrane helix</keyword>
<gene>
    <name evidence="8" type="primary">PAQR5</name>
    <name type="synonym">MPRG</name>
</gene>
<sequence>MLSLKLPRLFSIDQIPQVFHEQGILFGYRHPQSSATACILSLFQMTNETLNIWTHLLPFWFFAWRFVTALYMTDIKNDSYSWPMLVYMCTSCVYPLVSSCAHTFSSMSKNARHICYFLDYGAVNLFSLGSAIAYSAYTFPDALMCTTFHDYYVALAVLNTILSTGLSCYSRFLEIQKPRLCKVIRVLAFAYPYTWDSLPIFYRLFLFPGESAQNEATSYHQKHMIMTLLASFLYSAHLPERLAPGRFDYIGHSHQLFHVCVILATHMQMEAILLDKTLRKEWLLATSKPFSFSQIAGAILLCIIFSLSNIIYFSAALYRIPKPELHKKET</sequence>
<proteinExistence type="evidence at protein level"/>
<dbReference type="EMBL" id="AY424283">
    <property type="protein sequence ID" value="AAR08371.1"/>
    <property type="molecule type" value="mRNA"/>
</dbReference>
<dbReference type="EMBL" id="AK000197">
    <property type="protein sequence ID" value="BAA91004.1"/>
    <property type="molecule type" value="mRNA"/>
</dbReference>
<dbReference type="EMBL" id="BC039234">
    <property type="protein sequence ID" value="AAH39234.1"/>
    <property type="molecule type" value="mRNA"/>
</dbReference>
<dbReference type="CCDS" id="CCDS10232.1"/>
<dbReference type="RefSeq" id="NP_001098024.1">
    <property type="nucleotide sequence ID" value="NM_001104554.2"/>
</dbReference>
<dbReference type="RefSeq" id="NP_060175.3">
    <property type="nucleotide sequence ID" value="NM_017705.3"/>
</dbReference>
<dbReference type="RefSeq" id="XP_011520022.1">
    <property type="nucleotide sequence ID" value="XM_011521720.3"/>
</dbReference>
<dbReference type="RefSeq" id="XP_011520024.1">
    <property type="nucleotide sequence ID" value="XM_011521722.2"/>
</dbReference>
<dbReference type="RefSeq" id="XP_016877849.1">
    <property type="nucleotide sequence ID" value="XM_017022360.2"/>
</dbReference>
<dbReference type="RefSeq" id="XP_016877850.1">
    <property type="nucleotide sequence ID" value="XM_017022361.1"/>
</dbReference>
<dbReference type="RefSeq" id="XP_016877851.1">
    <property type="nucleotide sequence ID" value="XM_017022362.2"/>
</dbReference>
<dbReference type="RefSeq" id="XP_016877852.1">
    <property type="nucleotide sequence ID" value="XM_017022363.1"/>
</dbReference>
<dbReference type="RefSeq" id="XP_016877853.1">
    <property type="nucleotide sequence ID" value="XM_017022364.1"/>
</dbReference>
<dbReference type="RefSeq" id="XP_024305734.1">
    <property type="nucleotide sequence ID" value="XM_024449966.2"/>
</dbReference>
<dbReference type="RefSeq" id="XP_047288699.1">
    <property type="nucleotide sequence ID" value="XM_047432743.1"/>
</dbReference>
<dbReference type="RefSeq" id="XP_047288700.1">
    <property type="nucleotide sequence ID" value="XM_047432744.1"/>
</dbReference>
<dbReference type="RefSeq" id="XP_047288701.1">
    <property type="nucleotide sequence ID" value="XM_047432745.1"/>
</dbReference>
<dbReference type="RefSeq" id="XP_047288702.1">
    <property type="nucleotide sequence ID" value="XM_047432746.1"/>
</dbReference>
<dbReference type="RefSeq" id="XP_047288703.1">
    <property type="nucleotide sequence ID" value="XM_047432747.1"/>
</dbReference>
<dbReference type="RefSeq" id="XP_047288704.1">
    <property type="nucleotide sequence ID" value="XM_047432748.1"/>
</dbReference>
<dbReference type="RefSeq" id="XP_047288705.1">
    <property type="nucleotide sequence ID" value="XM_047432749.1"/>
</dbReference>
<dbReference type="RefSeq" id="XP_054234245.1">
    <property type="nucleotide sequence ID" value="XM_054378270.1"/>
</dbReference>
<dbReference type="RefSeq" id="XP_054234246.1">
    <property type="nucleotide sequence ID" value="XM_054378271.1"/>
</dbReference>
<dbReference type="RefSeq" id="XP_054234247.1">
    <property type="nucleotide sequence ID" value="XM_054378272.1"/>
</dbReference>
<dbReference type="RefSeq" id="XP_054234248.1">
    <property type="nucleotide sequence ID" value="XM_054378273.1"/>
</dbReference>
<dbReference type="RefSeq" id="XP_054234249.1">
    <property type="nucleotide sequence ID" value="XM_054378274.1"/>
</dbReference>
<dbReference type="RefSeq" id="XP_054234250.1">
    <property type="nucleotide sequence ID" value="XM_054378275.1"/>
</dbReference>
<dbReference type="RefSeq" id="XP_054234251.1">
    <property type="nucleotide sequence ID" value="XM_054378276.1"/>
</dbReference>
<dbReference type="RefSeq" id="XP_054234252.1">
    <property type="nucleotide sequence ID" value="XM_054378277.1"/>
</dbReference>
<dbReference type="RefSeq" id="XP_054234253.1">
    <property type="nucleotide sequence ID" value="XM_054378278.1"/>
</dbReference>
<dbReference type="RefSeq" id="XP_054234254.1">
    <property type="nucleotide sequence ID" value="XM_054378279.1"/>
</dbReference>
<dbReference type="RefSeq" id="XP_054234255.1">
    <property type="nucleotide sequence ID" value="XM_054378280.1"/>
</dbReference>
<dbReference type="RefSeq" id="XP_054234256.1">
    <property type="nucleotide sequence ID" value="XM_054378281.1"/>
</dbReference>
<dbReference type="RefSeq" id="XP_054234257.1">
    <property type="nucleotide sequence ID" value="XM_054378282.1"/>
</dbReference>
<dbReference type="SMR" id="Q9NXK6"/>
<dbReference type="BioGRID" id="120202">
    <property type="interactions" value="13"/>
</dbReference>
<dbReference type="FunCoup" id="Q9NXK6">
    <property type="interactions" value="43"/>
</dbReference>
<dbReference type="IntAct" id="Q9NXK6">
    <property type="interactions" value="9"/>
</dbReference>
<dbReference type="STRING" id="9606.ENSP00000378803"/>
<dbReference type="iPTMnet" id="Q9NXK6"/>
<dbReference type="PhosphoSitePlus" id="Q9NXK6"/>
<dbReference type="BioMuta" id="PAQR5"/>
<dbReference type="DMDM" id="143811422"/>
<dbReference type="MassIVE" id="Q9NXK6"/>
<dbReference type="PaxDb" id="9606-ENSP00000378803"/>
<dbReference type="PeptideAtlas" id="Q9NXK6"/>
<dbReference type="ProteomicsDB" id="83106"/>
<dbReference type="Antibodypedia" id="13981">
    <property type="antibodies" value="101 antibodies from 22 providers"/>
</dbReference>
<dbReference type="DNASU" id="54852"/>
<dbReference type="Ensembl" id="ENST00000340965.4">
    <property type="protein sequence ID" value="ENSP00000343877.3"/>
    <property type="gene ID" value="ENSG00000137819.14"/>
</dbReference>
<dbReference type="Ensembl" id="ENST00000395407.7">
    <property type="protein sequence ID" value="ENSP00000378803.2"/>
    <property type="gene ID" value="ENSG00000137819.14"/>
</dbReference>
<dbReference type="Ensembl" id="ENST00000561153.5">
    <property type="protein sequence ID" value="ENSP00000453526.1"/>
    <property type="gene ID" value="ENSG00000137819.14"/>
</dbReference>
<dbReference type="GeneID" id="54852"/>
<dbReference type="KEGG" id="hsa:54852"/>
<dbReference type="MANE-Select" id="ENST00000395407.7">
    <property type="protein sequence ID" value="ENSP00000378803.2"/>
    <property type="RefSeq nucleotide sequence ID" value="NM_017705.4"/>
    <property type="RefSeq protein sequence ID" value="NP_060175.3"/>
</dbReference>
<dbReference type="UCSC" id="uc002arz.3">
    <property type="organism name" value="human"/>
</dbReference>
<dbReference type="AGR" id="HGNC:29645"/>
<dbReference type="CTD" id="54852"/>
<dbReference type="DisGeNET" id="54852"/>
<dbReference type="GeneCards" id="PAQR5"/>
<dbReference type="HGNC" id="HGNC:29645">
    <property type="gene designation" value="PAQR5"/>
</dbReference>
<dbReference type="HPA" id="ENSG00000137819">
    <property type="expression patterns" value="Tissue enhanced (kidney)"/>
</dbReference>
<dbReference type="MIM" id="607781">
    <property type="type" value="gene"/>
</dbReference>
<dbReference type="neXtProt" id="NX_Q9NXK6"/>
<dbReference type="OpenTargets" id="ENSG00000137819"/>
<dbReference type="PharmGKB" id="PA142671199"/>
<dbReference type="VEuPathDB" id="HostDB:ENSG00000137819"/>
<dbReference type="eggNOG" id="KOG0748">
    <property type="taxonomic scope" value="Eukaryota"/>
</dbReference>
<dbReference type="GeneTree" id="ENSGT00940000158844"/>
<dbReference type="HOGENOM" id="CLU_052356_1_0_1"/>
<dbReference type="InParanoid" id="Q9NXK6"/>
<dbReference type="OMA" id="IDQMPQV"/>
<dbReference type="OrthoDB" id="529367at2759"/>
<dbReference type="PAN-GO" id="Q9NXK6">
    <property type="GO annotations" value="1 GO annotation based on evolutionary models"/>
</dbReference>
<dbReference type="PhylomeDB" id="Q9NXK6"/>
<dbReference type="TreeFam" id="TF319738"/>
<dbReference type="PathwayCommons" id="Q9NXK6"/>
<dbReference type="SignaLink" id="Q9NXK6"/>
<dbReference type="BioGRID-ORCS" id="54852">
    <property type="hits" value="15 hits in 1146 CRISPR screens"/>
</dbReference>
<dbReference type="ChiTaRS" id="PAQR5">
    <property type="organism name" value="human"/>
</dbReference>
<dbReference type="GenomeRNAi" id="54852"/>
<dbReference type="Pharos" id="Q9NXK6">
    <property type="development level" value="Tbio"/>
</dbReference>
<dbReference type="PRO" id="PR:Q9NXK6"/>
<dbReference type="Proteomes" id="UP000005640">
    <property type="component" value="Chromosome 15"/>
</dbReference>
<dbReference type="RNAct" id="Q9NXK6">
    <property type="molecule type" value="protein"/>
</dbReference>
<dbReference type="Bgee" id="ENSG00000137819">
    <property type="expression patterns" value="Expressed in metanephros cortex and 96 other cell types or tissues"/>
</dbReference>
<dbReference type="ExpressionAtlas" id="Q9NXK6">
    <property type="expression patterns" value="baseline and differential"/>
</dbReference>
<dbReference type="GO" id="GO:0005886">
    <property type="term" value="C:plasma membrane"/>
    <property type="evidence" value="ECO:0007669"/>
    <property type="project" value="UniProtKB-SubCell"/>
</dbReference>
<dbReference type="GO" id="GO:0038023">
    <property type="term" value="F:signaling receptor activity"/>
    <property type="evidence" value="ECO:0000318"/>
    <property type="project" value="GO_Central"/>
</dbReference>
<dbReference type="GO" id="GO:0005496">
    <property type="term" value="F:steroid binding"/>
    <property type="evidence" value="ECO:0007669"/>
    <property type="project" value="UniProtKB-KW"/>
</dbReference>
<dbReference type="GO" id="GO:0048477">
    <property type="term" value="P:oogenesis"/>
    <property type="evidence" value="ECO:0007669"/>
    <property type="project" value="UniProtKB-KW"/>
</dbReference>
<dbReference type="InterPro" id="IPR004254">
    <property type="entry name" value="AdipoR/HlyIII-related"/>
</dbReference>
<dbReference type="PANTHER" id="PTHR20855">
    <property type="entry name" value="ADIPOR/PROGESTIN RECEPTOR-RELATED"/>
    <property type="match status" value="1"/>
</dbReference>
<dbReference type="PANTHER" id="PTHR20855:SF38">
    <property type="entry name" value="MEMBRANE PROGESTIN RECEPTOR GAMMA"/>
    <property type="match status" value="1"/>
</dbReference>
<dbReference type="Pfam" id="PF03006">
    <property type="entry name" value="HlyIII"/>
    <property type="match status" value="1"/>
</dbReference>
<feature type="chain" id="PRO_0000218843" description="Membrane progestin receptor gamma">
    <location>
        <begin position="1"/>
        <end position="330"/>
    </location>
</feature>
<feature type="topological domain" description="Cytoplasmic" evidence="1">
    <location>
        <begin position="1"/>
        <end position="51"/>
    </location>
</feature>
<feature type="transmembrane region" description="Helical; Name=1" evidence="1">
    <location>
        <begin position="52"/>
        <end position="72"/>
    </location>
</feature>
<feature type="topological domain" description="Extracellular" evidence="1">
    <location>
        <begin position="73"/>
        <end position="80"/>
    </location>
</feature>
<feature type="transmembrane region" description="Helical; Name=2" evidence="1">
    <location>
        <begin position="81"/>
        <end position="101"/>
    </location>
</feature>
<feature type="topological domain" description="Cytoplasmic" evidence="1">
    <location>
        <begin position="102"/>
        <end position="113"/>
    </location>
</feature>
<feature type="transmembrane region" description="Helical; Name=3" evidence="1">
    <location>
        <begin position="114"/>
        <end position="134"/>
    </location>
</feature>
<feature type="topological domain" description="Extracellular" evidence="1">
    <location>
        <begin position="135"/>
        <end position="141"/>
    </location>
</feature>
<feature type="transmembrane region" description="Helical; Name=4" evidence="1">
    <location>
        <begin position="142"/>
        <end position="162"/>
    </location>
</feature>
<feature type="topological domain" description="Cytoplasmic" evidence="1">
    <location>
        <begin position="163"/>
        <end position="186"/>
    </location>
</feature>
<feature type="transmembrane region" description="Helical; Name=5" evidence="1">
    <location>
        <begin position="187"/>
        <end position="207"/>
    </location>
</feature>
<feature type="topological domain" description="Extracellular" evidence="1">
    <location>
        <begin position="208"/>
        <end position="253"/>
    </location>
</feature>
<feature type="transmembrane region" description="Helical; Name=6" evidence="1">
    <location>
        <begin position="254"/>
        <end position="274"/>
    </location>
</feature>
<feature type="topological domain" description="Cytoplasmic" evidence="1">
    <location>
        <begin position="275"/>
        <end position="294"/>
    </location>
</feature>
<feature type="transmembrane region" description="Helical; Name=7" evidence="1">
    <location>
        <begin position="295"/>
        <end position="315"/>
    </location>
</feature>
<feature type="topological domain" description="Extracellular" evidence="1">
    <location>
        <begin position="316"/>
        <end position="330"/>
    </location>
</feature>
<feature type="sequence variant" id="VAR_031436" description="In dbSNP:rs17853893." evidence="3">
    <original>I</original>
    <variation>T</variation>
    <location>
        <position position="24"/>
    </location>
</feature>
<feature type="sequence conflict" description="In Ref. 1; AAR08371 and 2; BAA91004." evidence="7" ref="1 2">
    <original>I</original>
    <variation>V</variation>
    <location>
        <position position="175"/>
    </location>
</feature>
<comment type="function">
    <text evidence="2 6">Plasma membrane progesterone (P4) receptor coupled to G proteins (PubMed:23763432). Seems to act through a G(i) mediated pathway (PubMed:23763432). May be involved in oocyte maturation (PubMed:12601167).</text>
</comment>
<comment type="interaction">
    <interactant intactId="EBI-10316423">
        <id>Q9NXK6</id>
    </interactant>
    <interactant intactId="EBI-781551">
        <id>Q9Y282</id>
        <label>ERGIC3</label>
    </interactant>
    <organismsDiffer>false</organismsDiffer>
    <experiments>3</experiments>
</comment>
<comment type="interaction">
    <interactant intactId="EBI-10316423">
        <id>Q9NXK6</id>
    </interactant>
    <interactant intactId="EBI-11721746">
        <id>Q8TED1</id>
        <label>GPX8</label>
    </interactant>
    <organismsDiffer>false</organismsDiffer>
    <experiments>3</experiments>
</comment>
<comment type="interaction">
    <interactant intactId="EBI-10316423">
        <id>Q9NXK6</id>
    </interactant>
    <interactant intactId="EBI-17451184">
        <id>Q9P2J2-2</id>
        <label>IGSF9</label>
    </interactant>
    <organismsDiffer>false</organismsDiffer>
    <experiments>3</experiments>
</comment>
<comment type="interaction">
    <interactant intactId="EBI-10316423">
        <id>Q9NXK6</id>
    </interactant>
    <interactant intactId="EBI-1757512">
        <id>P26951</id>
        <label>IL3RA</label>
    </interactant>
    <organismsDiffer>false</organismsDiffer>
    <experiments>3</experiments>
</comment>
<comment type="interaction">
    <interactant intactId="EBI-10316423">
        <id>Q9NXK6</id>
    </interactant>
    <interactant intactId="EBI-716478">
        <id>Q92561</id>
        <label>PHYHIP</label>
    </interactant>
    <organismsDiffer>false</organismsDiffer>
    <experiments>2</experiments>
</comment>
<comment type="interaction">
    <interactant intactId="EBI-10316423">
        <id>Q9NXK6</id>
    </interactant>
    <interactant intactId="EBI-1046170">
        <id>O95470</id>
        <label>SGPL1</label>
    </interactant>
    <organismsDiffer>false</organismsDiffer>
    <experiments>3</experiments>
</comment>
<comment type="interaction">
    <interactant intactId="EBI-10316423">
        <id>Q9NXK6</id>
    </interactant>
    <interactant intactId="EBI-7131783">
        <id>Q8N205</id>
        <label>SYNE4</label>
    </interactant>
    <organismsDiffer>false</organismsDiffer>
    <experiments>3</experiments>
</comment>
<comment type="subcellular location">
    <subcellularLocation>
        <location evidence="6">Cell membrane</location>
        <topology evidence="1">Multi-pass membrane protein</topology>
    </subcellularLocation>
</comment>
<comment type="tissue specificity">
    <text evidence="2 4">Expressed in the brain, lung, kidney, colon, adrenal and lung.</text>
</comment>
<comment type="miscellaneous">
    <text evidence="6">Non-classical progesterone receptors involved in extranuclear signaling are classified in 2 groups: the class II progestin and adipoQ receptor (PAQR) family (also called mPRs) (PAQR5, PAQR6, PAQR7, PAQR8 and PAQR9) and the b5-like heme/steroid-binding protein family (also called MAPRs) (PGRMC1, PGRMC2, NENF and CYB5D2).</text>
</comment>
<comment type="similarity">
    <text evidence="7">Belongs to the ADIPOR family.</text>
</comment>
<organism>
    <name type="scientific">Homo sapiens</name>
    <name type="common">Human</name>
    <dbReference type="NCBI Taxonomy" id="9606"/>
    <lineage>
        <taxon>Eukaryota</taxon>
        <taxon>Metazoa</taxon>
        <taxon>Chordata</taxon>
        <taxon>Craniata</taxon>
        <taxon>Vertebrata</taxon>
        <taxon>Euteleostomi</taxon>
        <taxon>Mammalia</taxon>
        <taxon>Eutheria</taxon>
        <taxon>Euarchontoglires</taxon>
        <taxon>Primates</taxon>
        <taxon>Haplorrhini</taxon>
        <taxon>Catarrhini</taxon>
        <taxon>Hominidae</taxon>
        <taxon>Homo</taxon>
    </lineage>
</organism>